<comment type="function">
    <text evidence="1">Bifunctional enzyme that catalyzes the formation of 4-diphosphocytidyl-2-C-methyl-D-erythritol from CTP and 2-C-methyl-D-erythritol 4-phosphate (MEP) (IspD), and catalyzes the conversion of 4-diphosphocytidyl-2-C-methyl-D-erythritol 2-phosphate (CDP-ME2P) to 2-C-methyl-D-erythritol 2,4-cyclodiphosphate (ME-CPP) with a corresponding release of cytidine 5-monophosphate (CMP) (IspF).</text>
</comment>
<comment type="catalytic activity">
    <reaction evidence="1">
        <text>2-C-methyl-D-erythritol 4-phosphate + CTP + H(+) = 4-CDP-2-C-methyl-D-erythritol + diphosphate</text>
        <dbReference type="Rhea" id="RHEA:13429"/>
        <dbReference type="ChEBI" id="CHEBI:15378"/>
        <dbReference type="ChEBI" id="CHEBI:33019"/>
        <dbReference type="ChEBI" id="CHEBI:37563"/>
        <dbReference type="ChEBI" id="CHEBI:57823"/>
        <dbReference type="ChEBI" id="CHEBI:58262"/>
        <dbReference type="EC" id="2.7.7.60"/>
    </reaction>
</comment>
<comment type="catalytic activity">
    <reaction evidence="1">
        <text>4-CDP-2-C-methyl-D-erythritol 2-phosphate = 2-C-methyl-D-erythritol 2,4-cyclic diphosphate + CMP</text>
        <dbReference type="Rhea" id="RHEA:23864"/>
        <dbReference type="ChEBI" id="CHEBI:57919"/>
        <dbReference type="ChEBI" id="CHEBI:58483"/>
        <dbReference type="ChEBI" id="CHEBI:60377"/>
        <dbReference type="EC" id="4.6.1.12"/>
    </reaction>
</comment>
<comment type="cofactor">
    <cofactor evidence="1">
        <name>a divalent metal cation</name>
        <dbReference type="ChEBI" id="CHEBI:60240"/>
    </cofactor>
</comment>
<comment type="pathway">
    <text evidence="1">Isoprenoid biosynthesis; isopentenyl diphosphate biosynthesis via DXP pathway; isopentenyl diphosphate from 1-deoxy-D-xylulose 5-phosphate: step 2/6.</text>
</comment>
<comment type="pathway">
    <text evidence="1">Isoprenoid biosynthesis; isopentenyl diphosphate biosynthesis via DXP pathway; isopentenyl diphosphate from 1-deoxy-D-xylulose 5-phosphate: step 4/6.</text>
</comment>
<comment type="similarity">
    <text evidence="1">In the N-terminal section; belongs to the IspD/TarI cytidylyltransferase family. IspD subfamily.</text>
</comment>
<comment type="similarity">
    <text evidence="1">In the C-terminal section; belongs to the IspF family.</text>
</comment>
<name>ISPDF_RHOP5</name>
<feature type="chain" id="PRO_0000296753" description="Bifunctional enzyme IspD/IspF">
    <location>
        <begin position="1"/>
        <end position="398"/>
    </location>
</feature>
<feature type="region of interest" description="2-C-methyl-D-erythritol 4-phosphate cytidylyltransferase" evidence="1">
    <location>
        <begin position="1"/>
        <end position="234"/>
    </location>
</feature>
<feature type="region of interest" description="2-C-methyl-D-erythritol 2,4-cyclodiphosphate synthase" evidence="1">
    <location>
        <begin position="235"/>
        <end position="398"/>
    </location>
</feature>
<feature type="binding site" evidence="1">
    <location>
        <begin position="241"/>
        <end position="243"/>
    </location>
    <ligand>
        <name>4-CDP-2-C-methyl-D-erythritol 2-phosphate</name>
        <dbReference type="ChEBI" id="CHEBI:57919"/>
    </ligand>
</feature>
<feature type="binding site" evidence="1">
    <location>
        <position position="241"/>
    </location>
    <ligand>
        <name>a divalent metal cation</name>
        <dbReference type="ChEBI" id="CHEBI:60240"/>
    </ligand>
</feature>
<feature type="binding site" evidence="1">
    <location>
        <position position="243"/>
    </location>
    <ligand>
        <name>a divalent metal cation</name>
        <dbReference type="ChEBI" id="CHEBI:60240"/>
    </ligand>
</feature>
<feature type="binding site" evidence="1">
    <location>
        <begin position="267"/>
        <end position="268"/>
    </location>
    <ligand>
        <name>4-CDP-2-C-methyl-D-erythritol 2-phosphate</name>
        <dbReference type="ChEBI" id="CHEBI:57919"/>
    </ligand>
</feature>
<feature type="binding site" evidence="1">
    <location>
        <position position="275"/>
    </location>
    <ligand>
        <name>a divalent metal cation</name>
        <dbReference type="ChEBI" id="CHEBI:60240"/>
    </ligand>
</feature>
<feature type="binding site" evidence="1">
    <location>
        <begin position="289"/>
        <end position="291"/>
    </location>
    <ligand>
        <name>4-CDP-2-C-methyl-D-erythritol 2-phosphate</name>
        <dbReference type="ChEBI" id="CHEBI:57919"/>
    </ligand>
</feature>
<feature type="binding site" evidence="1">
    <location>
        <begin position="365"/>
        <end position="368"/>
    </location>
    <ligand>
        <name>4-CDP-2-C-methyl-D-erythritol 2-phosphate</name>
        <dbReference type="ChEBI" id="CHEBI:57919"/>
    </ligand>
</feature>
<feature type="binding site" evidence="1">
    <location>
        <position position="372"/>
    </location>
    <ligand>
        <name>4-CDP-2-C-methyl-D-erythritol 2-phosphate</name>
        <dbReference type="ChEBI" id="CHEBI:57919"/>
    </ligand>
</feature>
<feature type="binding site" evidence="1">
    <location>
        <position position="375"/>
    </location>
    <ligand>
        <name>4-CDP-2-C-methyl-D-erythritol 2-phosphate</name>
        <dbReference type="ChEBI" id="CHEBI:57919"/>
    </ligand>
</feature>
<feature type="site" description="Transition state stabilizer" evidence="1">
    <location>
        <position position="19"/>
    </location>
</feature>
<feature type="site" description="Transition state stabilizer" evidence="1">
    <location>
        <position position="26"/>
    </location>
</feature>
<feature type="site" description="Positions MEP for the nucleophilic attack" evidence="1">
    <location>
        <position position="156"/>
    </location>
</feature>
<feature type="site" description="Positions MEP for the nucleophilic attack" evidence="1">
    <location>
        <position position="213"/>
    </location>
</feature>
<feature type="site" description="Transition state stabilizer" evidence="1">
    <location>
        <position position="267"/>
    </location>
</feature>
<feature type="site" description="Transition state stabilizer" evidence="1">
    <location>
        <position position="366"/>
    </location>
</feature>
<accession>Q07MZ2</accession>
<protein>
    <recommendedName>
        <fullName evidence="1">Bifunctional enzyme IspD/IspF</fullName>
    </recommendedName>
    <domain>
        <recommendedName>
            <fullName evidence="1">2-C-methyl-D-erythritol 4-phosphate cytidylyltransferase</fullName>
            <ecNumber evidence="1">2.7.7.60</ecNumber>
        </recommendedName>
        <alternativeName>
            <fullName evidence="1">4-diphosphocytidyl-2C-methyl-D-erythritol synthase</fullName>
        </alternativeName>
        <alternativeName>
            <fullName evidence="1">MEP cytidylyltransferase</fullName>
            <shortName evidence="1">MCT</shortName>
        </alternativeName>
    </domain>
    <domain>
        <recommendedName>
            <fullName evidence="1">2-C-methyl-D-erythritol 2,4-cyclodiphosphate synthase</fullName>
            <shortName evidence="1">MECDP-synthase</shortName>
            <shortName evidence="1">MECPP-synthase</shortName>
            <shortName evidence="1">MECPS</shortName>
            <ecNumber evidence="1">4.6.1.12</ecNumber>
        </recommendedName>
    </domain>
</protein>
<sequence length="398" mass="42313">MANSRRTAAIIVAGGRGLRAGGGGPKQYRTLAGQPVIYRSMQPFCTHPDVFAVQPVTSPDDIALFEQAVAGLTHRPPANGGATRQQSVYSGLEALAKDAPDIVLIHDAARAFVDAALISRAIVAAQRTGAAVPTIPVTDTIKQVNGTNDVEATPDRATLRIAQTPQAFRYDVILEAHRRAAREGRDDFTDDAAIAEWAGLTVATFEGDAANMKLTTPEDFVREESRLAALLGDIRTGTGYDVHAFGDGDHVWLCGLKVPHNRGFLAHSDGDVGLHALVDAILGALADGDIGSHFPPTDPQWKGAASDKFLKYAIDRVHARGGRIANLEVTMICERPKIGPLREAMRERIAEITGLPVSRIAVKATTSERLGFTGREEGIAATACATIRLPWGPNGLSG</sequence>
<organism>
    <name type="scientific">Rhodopseudomonas palustris (strain BisA53)</name>
    <dbReference type="NCBI Taxonomy" id="316055"/>
    <lineage>
        <taxon>Bacteria</taxon>
        <taxon>Pseudomonadati</taxon>
        <taxon>Pseudomonadota</taxon>
        <taxon>Alphaproteobacteria</taxon>
        <taxon>Hyphomicrobiales</taxon>
        <taxon>Nitrobacteraceae</taxon>
        <taxon>Rhodopseudomonas</taxon>
    </lineage>
</organism>
<gene>
    <name evidence="1" type="primary">ispDF</name>
    <name type="ordered locus">RPE_2755</name>
</gene>
<proteinExistence type="inferred from homology"/>
<keyword id="KW-0414">Isoprene biosynthesis</keyword>
<keyword id="KW-0456">Lyase</keyword>
<keyword id="KW-0479">Metal-binding</keyword>
<keyword id="KW-0511">Multifunctional enzyme</keyword>
<keyword id="KW-0548">Nucleotidyltransferase</keyword>
<keyword id="KW-0808">Transferase</keyword>
<reference key="1">
    <citation type="submission" date="2006-09" db="EMBL/GenBank/DDBJ databases">
        <title>Complete sequence of Rhodopseudomonas palustris BisA53.</title>
        <authorList>
            <consortium name="US DOE Joint Genome Institute"/>
            <person name="Copeland A."/>
            <person name="Lucas S."/>
            <person name="Lapidus A."/>
            <person name="Barry K."/>
            <person name="Detter J.C."/>
            <person name="Glavina del Rio T."/>
            <person name="Hammon N."/>
            <person name="Israni S."/>
            <person name="Dalin E."/>
            <person name="Tice H."/>
            <person name="Pitluck S."/>
            <person name="Chain P."/>
            <person name="Malfatti S."/>
            <person name="Shin M."/>
            <person name="Vergez L."/>
            <person name="Schmutz J."/>
            <person name="Larimer F."/>
            <person name="Land M."/>
            <person name="Hauser L."/>
            <person name="Pelletier D.A."/>
            <person name="Kyrpides N."/>
            <person name="Kim E."/>
            <person name="Harwood C.S."/>
            <person name="Oda Y."/>
            <person name="Richardson P."/>
        </authorList>
    </citation>
    <scope>NUCLEOTIDE SEQUENCE [LARGE SCALE GENOMIC DNA]</scope>
    <source>
        <strain>BisA53</strain>
    </source>
</reference>
<dbReference type="EC" id="2.7.7.60" evidence="1"/>
<dbReference type="EC" id="4.6.1.12" evidence="1"/>
<dbReference type="EMBL" id="CP000463">
    <property type="protein sequence ID" value="ABJ06692.1"/>
    <property type="molecule type" value="Genomic_DNA"/>
</dbReference>
<dbReference type="SMR" id="Q07MZ2"/>
<dbReference type="STRING" id="316055.RPE_2755"/>
<dbReference type="KEGG" id="rpe:RPE_2755"/>
<dbReference type="eggNOG" id="COG0245">
    <property type="taxonomic scope" value="Bacteria"/>
</dbReference>
<dbReference type="eggNOG" id="COG1211">
    <property type="taxonomic scope" value="Bacteria"/>
</dbReference>
<dbReference type="HOGENOM" id="CLU_042800_0_1_5"/>
<dbReference type="OrthoDB" id="9804336at2"/>
<dbReference type="UniPathway" id="UPA00056">
    <property type="reaction ID" value="UER00093"/>
</dbReference>
<dbReference type="UniPathway" id="UPA00056">
    <property type="reaction ID" value="UER00095"/>
</dbReference>
<dbReference type="GO" id="GO:0008685">
    <property type="term" value="F:2-C-methyl-D-erythritol 2,4-cyclodiphosphate synthase activity"/>
    <property type="evidence" value="ECO:0007669"/>
    <property type="project" value="UniProtKB-UniRule"/>
</dbReference>
<dbReference type="GO" id="GO:0050518">
    <property type="term" value="F:2-C-methyl-D-erythritol 4-phosphate cytidylyltransferase activity"/>
    <property type="evidence" value="ECO:0007669"/>
    <property type="project" value="UniProtKB-UniRule"/>
</dbReference>
<dbReference type="GO" id="GO:0046872">
    <property type="term" value="F:metal ion binding"/>
    <property type="evidence" value="ECO:0007669"/>
    <property type="project" value="UniProtKB-KW"/>
</dbReference>
<dbReference type="GO" id="GO:0019288">
    <property type="term" value="P:isopentenyl diphosphate biosynthetic process, methylerythritol 4-phosphate pathway"/>
    <property type="evidence" value="ECO:0007669"/>
    <property type="project" value="UniProtKB-UniRule"/>
</dbReference>
<dbReference type="GO" id="GO:0016114">
    <property type="term" value="P:terpenoid biosynthetic process"/>
    <property type="evidence" value="ECO:0007669"/>
    <property type="project" value="InterPro"/>
</dbReference>
<dbReference type="CDD" id="cd02516">
    <property type="entry name" value="CDP-ME_synthetase"/>
    <property type="match status" value="1"/>
</dbReference>
<dbReference type="CDD" id="cd00554">
    <property type="entry name" value="MECDP_synthase"/>
    <property type="match status" value="1"/>
</dbReference>
<dbReference type="FunFam" id="3.90.550.10:FF:000003">
    <property type="entry name" value="2-C-methyl-D-erythritol 4-phosphate cytidylyltransferase"/>
    <property type="match status" value="1"/>
</dbReference>
<dbReference type="Gene3D" id="3.30.1330.50">
    <property type="entry name" value="2-C-methyl-D-erythritol 2,4-cyclodiphosphate synthase"/>
    <property type="match status" value="1"/>
</dbReference>
<dbReference type="Gene3D" id="3.90.550.10">
    <property type="entry name" value="Spore Coat Polysaccharide Biosynthesis Protein SpsA, Chain A"/>
    <property type="match status" value="1"/>
</dbReference>
<dbReference type="HAMAP" id="MF_00108">
    <property type="entry name" value="IspD"/>
    <property type="match status" value="1"/>
</dbReference>
<dbReference type="HAMAP" id="MF_01520">
    <property type="entry name" value="IspDF"/>
    <property type="match status" value="1"/>
</dbReference>
<dbReference type="HAMAP" id="MF_00107">
    <property type="entry name" value="IspF"/>
    <property type="match status" value="1"/>
</dbReference>
<dbReference type="InterPro" id="IPR001228">
    <property type="entry name" value="IspD"/>
</dbReference>
<dbReference type="InterPro" id="IPR026596">
    <property type="entry name" value="IspD/F"/>
</dbReference>
<dbReference type="InterPro" id="IPR034683">
    <property type="entry name" value="IspD/TarI"/>
</dbReference>
<dbReference type="InterPro" id="IPR018294">
    <property type="entry name" value="ISPD_synthase_CS"/>
</dbReference>
<dbReference type="InterPro" id="IPR003526">
    <property type="entry name" value="MECDP_synthase"/>
</dbReference>
<dbReference type="InterPro" id="IPR020555">
    <property type="entry name" value="MECDP_synthase_CS"/>
</dbReference>
<dbReference type="InterPro" id="IPR036571">
    <property type="entry name" value="MECDP_synthase_sf"/>
</dbReference>
<dbReference type="InterPro" id="IPR029044">
    <property type="entry name" value="Nucleotide-diphossugar_trans"/>
</dbReference>
<dbReference type="NCBIfam" id="TIGR00453">
    <property type="entry name" value="ispD"/>
    <property type="match status" value="1"/>
</dbReference>
<dbReference type="NCBIfam" id="TIGR00151">
    <property type="entry name" value="ispF"/>
    <property type="match status" value="1"/>
</dbReference>
<dbReference type="NCBIfam" id="NF006899">
    <property type="entry name" value="PRK09382.1"/>
    <property type="match status" value="1"/>
</dbReference>
<dbReference type="PANTHER" id="PTHR43181">
    <property type="entry name" value="2-C-METHYL-D-ERYTHRITOL 2,4-CYCLODIPHOSPHATE SYNTHASE, CHLOROPLASTIC"/>
    <property type="match status" value="1"/>
</dbReference>
<dbReference type="PANTHER" id="PTHR43181:SF1">
    <property type="entry name" value="2-C-METHYL-D-ERYTHRITOL 2,4-CYCLODIPHOSPHATE SYNTHASE, CHLOROPLASTIC"/>
    <property type="match status" value="1"/>
</dbReference>
<dbReference type="Pfam" id="PF01128">
    <property type="entry name" value="IspD"/>
    <property type="match status" value="1"/>
</dbReference>
<dbReference type="Pfam" id="PF02542">
    <property type="entry name" value="YgbB"/>
    <property type="match status" value="1"/>
</dbReference>
<dbReference type="SUPFAM" id="SSF69765">
    <property type="entry name" value="IpsF-like"/>
    <property type="match status" value="1"/>
</dbReference>
<dbReference type="SUPFAM" id="SSF53448">
    <property type="entry name" value="Nucleotide-diphospho-sugar transferases"/>
    <property type="match status" value="1"/>
</dbReference>
<dbReference type="PROSITE" id="PS01295">
    <property type="entry name" value="ISPD"/>
    <property type="match status" value="1"/>
</dbReference>
<dbReference type="PROSITE" id="PS01350">
    <property type="entry name" value="ISPF"/>
    <property type="match status" value="1"/>
</dbReference>
<evidence type="ECO:0000255" key="1">
    <source>
        <dbReference type="HAMAP-Rule" id="MF_01520"/>
    </source>
</evidence>